<feature type="signal peptide" evidence="1">
    <location>
        <begin position="1"/>
        <end position="17"/>
    </location>
</feature>
<feature type="chain" id="PRO_0000018162" description="Outer membrane lipoprotein SlyB">
    <location>
        <begin position="18"/>
        <end position="155"/>
    </location>
</feature>
<feature type="lipid moiety-binding region" description="N-palmitoyl cysteine" evidence="1">
    <location>
        <position position="18"/>
    </location>
</feature>
<feature type="lipid moiety-binding region" description="S-diacylglycerol cysteine" evidence="1">
    <location>
        <position position="18"/>
    </location>
</feature>
<name>SLYB_ECO57</name>
<dbReference type="EMBL" id="AE005174">
    <property type="protein sequence ID" value="AAG56630.1"/>
    <property type="molecule type" value="Genomic_DNA"/>
</dbReference>
<dbReference type="EMBL" id="BA000007">
    <property type="protein sequence ID" value="BAB35773.1"/>
    <property type="molecule type" value="Genomic_DNA"/>
</dbReference>
<dbReference type="PIR" id="B85771">
    <property type="entry name" value="B85771"/>
</dbReference>
<dbReference type="PIR" id="F90922">
    <property type="entry name" value="F90922"/>
</dbReference>
<dbReference type="RefSeq" id="NP_310377.1">
    <property type="nucleotide sequence ID" value="NC_002695.1"/>
</dbReference>
<dbReference type="RefSeq" id="WP_000597196.1">
    <property type="nucleotide sequence ID" value="NZ_VOAI01000007.1"/>
</dbReference>
<dbReference type="SMR" id="P0A906"/>
<dbReference type="STRING" id="155864.Z2655"/>
<dbReference type="GeneID" id="912692"/>
<dbReference type="GeneID" id="93775795"/>
<dbReference type="KEGG" id="ece:Z2655"/>
<dbReference type="KEGG" id="ecs:ECs_2350"/>
<dbReference type="PATRIC" id="fig|386585.9.peg.2459"/>
<dbReference type="eggNOG" id="COG3133">
    <property type="taxonomic scope" value="Bacteria"/>
</dbReference>
<dbReference type="HOGENOM" id="CLU_090265_3_1_6"/>
<dbReference type="OMA" id="IVVVQKY"/>
<dbReference type="Proteomes" id="UP000000558">
    <property type="component" value="Chromosome"/>
</dbReference>
<dbReference type="Proteomes" id="UP000002519">
    <property type="component" value="Chromosome"/>
</dbReference>
<dbReference type="GO" id="GO:0009279">
    <property type="term" value="C:cell outer membrane"/>
    <property type="evidence" value="ECO:0007669"/>
    <property type="project" value="UniProtKB-SubCell"/>
</dbReference>
<dbReference type="InterPro" id="IPR051407">
    <property type="entry name" value="Bact_OM_lipoprot/Surf_antigen"/>
</dbReference>
<dbReference type="InterPro" id="IPR008816">
    <property type="entry name" value="Gly_zipper_2TM_dom"/>
</dbReference>
<dbReference type="PANTHER" id="PTHR35603">
    <property type="match status" value="1"/>
</dbReference>
<dbReference type="PANTHER" id="PTHR35603:SF1">
    <property type="entry name" value="OUTER MEMBRANE LIPOPROTEIN SLYB"/>
    <property type="match status" value="1"/>
</dbReference>
<dbReference type="Pfam" id="PF05433">
    <property type="entry name" value="Rick_17kDa_Anti"/>
    <property type="match status" value="1"/>
</dbReference>
<dbReference type="PROSITE" id="PS51257">
    <property type="entry name" value="PROKAR_LIPOPROTEIN"/>
    <property type="match status" value="1"/>
</dbReference>
<evidence type="ECO:0000255" key="1">
    <source>
        <dbReference type="PROSITE-ProRule" id="PRU00303"/>
    </source>
</evidence>
<evidence type="ECO:0000305" key="2"/>
<accession>P0A906</accession>
<accession>P55741</accession>
<accession>P76183</accession>
<comment type="subcellular location">
    <subcellularLocation>
        <location evidence="2">Cell outer membrane</location>
        <topology evidence="1">Lipid-anchor</topology>
    </subcellularLocation>
</comment>
<comment type="similarity">
    <text evidence="2">Belongs to the Pcp/SlyB lipoprotein family.</text>
</comment>
<keyword id="KW-0998">Cell outer membrane</keyword>
<keyword id="KW-0449">Lipoprotein</keyword>
<keyword id="KW-0472">Membrane</keyword>
<keyword id="KW-0564">Palmitate</keyword>
<keyword id="KW-1185">Reference proteome</keyword>
<keyword id="KW-0732">Signal</keyword>
<organism>
    <name type="scientific">Escherichia coli O157:H7</name>
    <dbReference type="NCBI Taxonomy" id="83334"/>
    <lineage>
        <taxon>Bacteria</taxon>
        <taxon>Pseudomonadati</taxon>
        <taxon>Pseudomonadota</taxon>
        <taxon>Gammaproteobacteria</taxon>
        <taxon>Enterobacterales</taxon>
        <taxon>Enterobacteriaceae</taxon>
        <taxon>Escherichia</taxon>
    </lineage>
</organism>
<reference key="1">
    <citation type="journal article" date="2001" name="Nature">
        <title>Genome sequence of enterohaemorrhagic Escherichia coli O157:H7.</title>
        <authorList>
            <person name="Perna N.T."/>
            <person name="Plunkett G. III"/>
            <person name="Burland V."/>
            <person name="Mau B."/>
            <person name="Glasner J.D."/>
            <person name="Rose D.J."/>
            <person name="Mayhew G.F."/>
            <person name="Evans P.S."/>
            <person name="Gregor J."/>
            <person name="Kirkpatrick H.A."/>
            <person name="Posfai G."/>
            <person name="Hackett J."/>
            <person name="Klink S."/>
            <person name="Boutin A."/>
            <person name="Shao Y."/>
            <person name="Miller L."/>
            <person name="Grotbeck E.J."/>
            <person name="Davis N.W."/>
            <person name="Lim A."/>
            <person name="Dimalanta E.T."/>
            <person name="Potamousis K."/>
            <person name="Apodaca J."/>
            <person name="Anantharaman T.S."/>
            <person name="Lin J."/>
            <person name="Yen G."/>
            <person name="Schwartz D.C."/>
            <person name="Welch R.A."/>
            <person name="Blattner F.R."/>
        </authorList>
    </citation>
    <scope>NUCLEOTIDE SEQUENCE [LARGE SCALE GENOMIC DNA]</scope>
    <source>
        <strain>O157:H7 / EDL933 / ATCC 700927 / EHEC</strain>
    </source>
</reference>
<reference key="2">
    <citation type="journal article" date="2001" name="DNA Res.">
        <title>Complete genome sequence of enterohemorrhagic Escherichia coli O157:H7 and genomic comparison with a laboratory strain K-12.</title>
        <authorList>
            <person name="Hayashi T."/>
            <person name="Makino K."/>
            <person name="Ohnishi M."/>
            <person name="Kurokawa K."/>
            <person name="Ishii K."/>
            <person name="Yokoyama K."/>
            <person name="Han C.-G."/>
            <person name="Ohtsubo E."/>
            <person name="Nakayama K."/>
            <person name="Murata T."/>
            <person name="Tanaka M."/>
            <person name="Tobe T."/>
            <person name="Iida T."/>
            <person name="Takami H."/>
            <person name="Honda T."/>
            <person name="Sasakawa C."/>
            <person name="Ogasawara N."/>
            <person name="Yasunaga T."/>
            <person name="Kuhara S."/>
            <person name="Shiba T."/>
            <person name="Hattori M."/>
            <person name="Shinagawa H."/>
        </authorList>
    </citation>
    <scope>NUCLEOTIDE SEQUENCE [LARGE SCALE GENOMIC DNA]</scope>
    <source>
        <strain>O157:H7 / Sakai / RIMD 0509952 / EHEC</strain>
    </source>
</reference>
<sequence length="155" mass="15602">MIKRVLVVSMVGLSLVGCVNNDTLSGDVYTASEAKQVQNVSYGTIVNVRPVQIQGGDDSNVIGAIGGAVLGGFLGNTVGGGTGRSLATAAGAVAGGVAGQGVQSAMNKTQGVELEIRKDDGNTIMVVQKQGNTRFSPGQRVVLASNGSQVTVSPR</sequence>
<gene>
    <name type="primary">slyB</name>
    <name type="ordered locus">Z2655</name>
    <name type="ordered locus">ECs2350</name>
</gene>
<protein>
    <recommendedName>
        <fullName>Outer membrane lipoprotein SlyB</fullName>
    </recommendedName>
</protein>
<proteinExistence type="inferred from homology"/>